<organism>
    <name type="scientific">Archaeoglobus fulgidus (strain ATCC 49558 / DSM 4304 / JCM 9628 / NBRC 100126 / VC-16)</name>
    <dbReference type="NCBI Taxonomy" id="224325"/>
    <lineage>
        <taxon>Archaea</taxon>
        <taxon>Methanobacteriati</taxon>
        <taxon>Methanobacteriota</taxon>
        <taxon>Archaeoglobi</taxon>
        <taxon>Archaeoglobales</taxon>
        <taxon>Archaeoglobaceae</taxon>
        <taxon>Archaeoglobus</taxon>
    </lineage>
</organism>
<keyword id="KW-0002">3D-structure</keyword>
<keyword id="KW-0489">Methyltransferase</keyword>
<keyword id="KW-1185">Reference proteome</keyword>
<keyword id="KW-0694">RNA-binding</keyword>
<keyword id="KW-0698">rRNA processing</keyword>
<keyword id="KW-0808">Transferase</keyword>
<keyword id="KW-0819">tRNA processing</keyword>
<gene>
    <name evidence="1" type="primary">flpA</name>
    <name type="ordered locus">AF_2087</name>
</gene>
<protein>
    <recommendedName>
        <fullName evidence="1">Fibrillarin-like rRNA/tRNA 2'-O-methyltransferase</fullName>
        <ecNumber evidence="1">2.1.1.-</ecNumber>
    </recommendedName>
</protein>
<accession>O28192</accession>
<evidence type="ECO:0000255" key="1">
    <source>
        <dbReference type="HAMAP-Rule" id="MF_00351"/>
    </source>
</evidence>
<evidence type="ECO:0000269" key="2">
    <source>
    </source>
</evidence>
<evidence type="ECO:0000269" key="3">
    <source>
    </source>
</evidence>
<evidence type="ECO:0007829" key="4">
    <source>
        <dbReference type="PDB" id="1NT2"/>
    </source>
</evidence>
<dbReference type="EC" id="2.1.1.-" evidence="1"/>
<dbReference type="EMBL" id="AE000782">
    <property type="protein sequence ID" value="AAB89169.1"/>
    <property type="molecule type" value="Genomic_DNA"/>
</dbReference>
<dbReference type="PIR" id="F69510">
    <property type="entry name" value="F69510"/>
</dbReference>
<dbReference type="RefSeq" id="WP_010879579.1">
    <property type="nucleotide sequence ID" value="NC_000917.1"/>
</dbReference>
<dbReference type="PDB" id="1NT2">
    <property type="method" value="X-ray"/>
    <property type="resolution" value="2.90 A"/>
    <property type="chains" value="A=1-210"/>
</dbReference>
<dbReference type="PDBsum" id="1NT2"/>
<dbReference type="SMR" id="O28192"/>
<dbReference type="IntAct" id="O28192">
    <property type="interactions" value="1"/>
</dbReference>
<dbReference type="STRING" id="224325.AF_2087"/>
<dbReference type="PaxDb" id="224325-AF_2087"/>
<dbReference type="EnsemblBacteria" id="AAB89169">
    <property type="protein sequence ID" value="AAB89169"/>
    <property type="gene ID" value="AF_2087"/>
</dbReference>
<dbReference type="GeneID" id="1485314"/>
<dbReference type="KEGG" id="afu:AF_2087"/>
<dbReference type="eggNOG" id="arCOG00078">
    <property type="taxonomic scope" value="Archaea"/>
</dbReference>
<dbReference type="HOGENOM" id="CLU_059055_2_0_2"/>
<dbReference type="OrthoDB" id="6244at2157"/>
<dbReference type="PhylomeDB" id="O28192"/>
<dbReference type="EvolutionaryTrace" id="O28192"/>
<dbReference type="Proteomes" id="UP000002199">
    <property type="component" value="Chromosome"/>
</dbReference>
<dbReference type="GO" id="GO:1990259">
    <property type="term" value="F:histone H2AQ104 methyltransferase activity"/>
    <property type="evidence" value="ECO:0007669"/>
    <property type="project" value="TreeGrafter"/>
</dbReference>
<dbReference type="GO" id="GO:0003723">
    <property type="term" value="F:RNA binding"/>
    <property type="evidence" value="ECO:0007669"/>
    <property type="project" value="UniProtKB-UniRule"/>
</dbReference>
<dbReference type="GO" id="GO:0008649">
    <property type="term" value="F:rRNA methyltransferase activity"/>
    <property type="evidence" value="ECO:0007669"/>
    <property type="project" value="TreeGrafter"/>
</dbReference>
<dbReference type="GO" id="GO:0000494">
    <property type="term" value="P:box C/D sno(s)RNA 3'-end processing"/>
    <property type="evidence" value="ECO:0007669"/>
    <property type="project" value="TreeGrafter"/>
</dbReference>
<dbReference type="GO" id="GO:0008033">
    <property type="term" value="P:tRNA processing"/>
    <property type="evidence" value="ECO:0007669"/>
    <property type="project" value="UniProtKB-UniRule"/>
</dbReference>
<dbReference type="CDD" id="cd02440">
    <property type="entry name" value="AdoMet_MTases"/>
    <property type="match status" value="1"/>
</dbReference>
<dbReference type="Gene3D" id="3.30.200.20">
    <property type="entry name" value="Phosphorylase Kinase, domain 1"/>
    <property type="match status" value="1"/>
</dbReference>
<dbReference type="Gene3D" id="3.40.50.150">
    <property type="entry name" value="Vaccinia Virus protein VP39"/>
    <property type="match status" value="1"/>
</dbReference>
<dbReference type="HAMAP" id="MF_00351">
    <property type="entry name" value="RNA_methyltransf_FlpA"/>
    <property type="match status" value="1"/>
</dbReference>
<dbReference type="InterPro" id="IPR000692">
    <property type="entry name" value="Fibrillarin"/>
</dbReference>
<dbReference type="InterPro" id="IPR020813">
    <property type="entry name" value="Fibrillarin_CS"/>
</dbReference>
<dbReference type="InterPro" id="IPR029063">
    <property type="entry name" value="SAM-dependent_MTases_sf"/>
</dbReference>
<dbReference type="NCBIfam" id="NF003276">
    <property type="entry name" value="PRK04266.1-2"/>
    <property type="match status" value="1"/>
</dbReference>
<dbReference type="PANTHER" id="PTHR10335:SF17">
    <property type="entry name" value="FIBRILLARIN"/>
    <property type="match status" value="1"/>
</dbReference>
<dbReference type="PANTHER" id="PTHR10335">
    <property type="entry name" value="RRNA 2-O-METHYLTRANSFERASE FIBRILLARIN"/>
    <property type="match status" value="1"/>
</dbReference>
<dbReference type="Pfam" id="PF01269">
    <property type="entry name" value="Fibrillarin"/>
    <property type="match status" value="1"/>
</dbReference>
<dbReference type="PIRSF" id="PIRSF006540">
    <property type="entry name" value="Nop17p"/>
    <property type="match status" value="1"/>
</dbReference>
<dbReference type="PRINTS" id="PR00052">
    <property type="entry name" value="FIBRILLARIN"/>
</dbReference>
<dbReference type="SMART" id="SM01206">
    <property type="entry name" value="Fibrillarin"/>
    <property type="match status" value="1"/>
</dbReference>
<dbReference type="SUPFAM" id="SSF53335">
    <property type="entry name" value="S-adenosyl-L-methionine-dependent methyltransferases"/>
    <property type="match status" value="1"/>
</dbReference>
<dbReference type="PROSITE" id="PS00566">
    <property type="entry name" value="FIBRILLARIN"/>
    <property type="match status" value="1"/>
</dbReference>
<sequence>MKELMRNVYLLDDTLVTKSKYGSHYGEKVFDGYREWVPWRSKLAAMILKGHRLKLRGDERVLYLGAASGTTVSHLADIVDEGIIYAVEYSAKPFEKLLELVRERNNIIPLLFDASKPWKYSGIVEKVDLIYQDIAQKNQIEILKANAEFFLKEKGEVVIMVKARSIDSTAEPEEVFKSVLKEMEGDFKIVKHGSLMPYHRDHIFIHAYRF</sequence>
<comment type="function">
    <text evidence="1 3">Involved in pre-rRNA and tRNA processing. Utilizes the methyl donor S-adenosyl-L-methionine to catalyze the site-specific 2'-hydroxyl methylation of ribose moieties in rRNA and tRNA. Site specificity is provided by a guide RNA that base pairs with the substrate. Methylation occurs at a characteristic distance from the sequence involved in base pairing with the guide RNA.</text>
</comment>
<comment type="subunit">
    <text evidence="1 2 3">Interacts with nop5. Component of box C/D small ribonucleoprotein (sRNP) particles that contain rpl7ae, FlpA and nop5, plus a guide RNA.</text>
</comment>
<comment type="similarity">
    <text evidence="1">Belongs to the methyltransferase superfamily. Fibrillarin family.</text>
</comment>
<name>FLPA_ARCFU</name>
<feature type="chain" id="PRO_0000148529" description="Fibrillarin-like rRNA/tRNA 2'-O-methyltransferase">
    <location>
        <begin position="1"/>
        <end position="210"/>
    </location>
</feature>
<feature type="binding site">
    <location>
        <begin position="70"/>
        <end position="71"/>
    </location>
    <ligand>
        <name>S-adenosyl-L-methionine</name>
        <dbReference type="ChEBI" id="CHEBI:59789"/>
    </ligand>
</feature>
<feature type="binding site">
    <location>
        <begin position="88"/>
        <end position="89"/>
    </location>
    <ligand>
        <name>S-adenosyl-L-methionine</name>
        <dbReference type="ChEBI" id="CHEBI:59789"/>
    </ligand>
</feature>
<feature type="binding site">
    <location>
        <begin position="113"/>
        <end position="114"/>
    </location>
    <ligand>
        <name>S-adenosyl-L-methionine</name>
        <dbReference type="ChEBI" id="CHEBI:59789"/>
    </ligand>
</feature>
<feature type="binding site" evidence="1">
    <location>
        <begin position="133"/>
        <end position="136"/>
    </location>
    <ligand>
        <name>S-adenosyl-L-methionine</name>
        <dbReference type="ChEBI" id="CHEBI:59789"/>
    </ligand>
</feature>
<feature type="mutagenesis site" description="Loss of RNA methyltransferase activity. No effect on affinity for S-adenosyl-L-methionine." evidence="3">
    <original>T</original>
    <variation>A</variation>
    <location>
        <position position="70"/>
    </location>
</feature>
<feature type="mutagenesis site" description="Loss of RNA methyltransferase activity. No effect on affinity for S-adenosyl-L-methionine." evidence="3">
    <original>E</original>
    <variation>A</variation>
    <location>
        <position position="88"/>
    </location>
</feature>
<feature type="mutagenesis site" description="Strongly reduced RNA methyltransferase activity. Reduced affinity for S-adenosyl-L-methionine." evidence="3">
    <original>Y</original>
    <variation>A</variation>
    <location>
        <position position="89"/>
    </location>
</feature>
<feature type="mutagenesis site" description="Loss of RNA methyltransferase activity. Strongly decreased affinity for S-adenosyl-L-methionine." evidence="3">
    <original>D</original>
    <variation>A</variation>
    <location>
        <position position="133"/>
    </location>
</feature>
<feature type="strand" evidence="4">
    <location>
        <begin position="3"/>
        <end position="5"/>
    </location>
</feature>
<feature type="strand" evidence="4">
    <location>
        <begin position="8"/>
        <end position="11"/>
    </location>
</feature>
<feature type="strand" evidence="4">
    <location>
        <begin position="14"/>
        <end position="18"/>
    </location>
</feature>
<feature type="strand" evidence="4">
    <location>
        <begin position="24"/>
        <end position="26"/>
    </location>
</feature>
<feature type="strand" evidence="4">
    <location>
        <begin position="33"/>
        <end position="35"/>
    </location>
</feature>
<feature type="helix" evidence="4">
    <location>
        <begin position="38"/>
        <end position="40"/>
    </location>
</feature>
<feature type="helix" evidence="4">
    <location>
        <begin position="42"/>
        <end position="48"/>
    </location>
</feature>
<feature type="strand" evidence="4">
    <location>
        <begin position="60"/>
        <end position="64"/>
    </location>
</feature>
<feature type="helix" evidence="4">
    <location>
        <begin position="70"/>
        <end position="78"/>
    </location>
</feature>
<feature type="turn" evidence="4">
    <location>
        <begin position="79"/>
        <end position="81"/>
    </location>
</feature>
<feature type="strand" evidence="4">
    <location>
        <begin position="82"/>
        <end position="87"/>
    </location>
</feature>
<feature type="helix" evidence="4">
    <location>
        <begin position="91"/>
        <end position="103"/>
    </location>
</feature>
<feature type="strand" evidence="4">
    <location>
        <begin position="105"/>
        <end position="110"/>
    </location>
</feature>
<feature type="helix" evidence="4">
    <location>
        <begin position="117"/>
        <end position="119"/>
    </location>
</feature>
<feature type="turn" evidence="4">
    <location>
        <begin position="120"/>
        <end position="123"/>
    </location>
</feature>
<feature type="strand" evidence="4">
    <location>
        <begin position="127"/>
        <end position="132"/>
    </location>
</feature>
<feature type="helix" evidence="4">
    <location>
        <begin position="139"/>
        <end position="150"/>
    </location>
</feature>
<feature type="strand" evidence="4">
    <location>
        <begin position="151"/>
        <end position="162"/>
    </location>
</feature>
<feature type="helix" evidence="4">
    <location>
        <begin position="163"/>
        <end position="166"/>
    </location>
</feature>
<feature type="helix" evidence="4">
    <location>
        <begin position="172"/>
        <end position="184"/>
    </location>
</feature>
<feature type="strand" evidence="4">
    <location>
        <begin position="187"/>
        <end position="194"/>
    </location>
</feature>
<feature type="turn" evidence="4">
    <location>
        <begin position="196"/>
        <end position="198"/>
    </location>
</feature>
<feature type="strand" evidence="4">
    <location>
        <begin position="202"/>
        <end position="209"/>
    </location>
</feature>
<proteinExistence type="evidence at protein level"/>
<reference key="1">
    <citation type="journal article" date="1997" name="Nature">
        <title>The complete genome sequence of the hyperthermophilic, sulphate-reducing archaeon Archaeoglobus fulgidus.</title>
        <authorList>
            <person name="Klenk H.-P."/>
            <person name="Clayton R.A."/>
            <person name="Tomb J.-F."/>
            <person name="White O."/>
            <person name="Nelson K.E."/>
            <person name="Ketchum K.A."/>
            <person name="Dodson R.J."/>
            <person name="Gwinn M.L."/>
            <person name="Hickey E.K."/>
            <person name="Peterson J.D."/>
            <person name="Richardson D.L."/>
            <person name="Kerlavage A.R."/>
            <person name="Graham D.E."/>
            <person name="Kyrpides N.C."/>
            <person name="Fleischmann R.D."/>
            <person name="Quackenbush J."/>
            <person name="Lee N.H."/>
            <person name="Sutton G.G."/>
            <person name="Gill S.R."/>
            <person name="Kirkness E.F."/>
            <person name="Dougherty B.A."/>
            <person name="McKenney K."/>
            <person name="Adams M.D."/>
            <person name="Loftus B.J."/>
            <person name="Peterson S.N."/>
            <person name="Reich C.I."/>
            <person name="McNeil L.K."/>
            <person name="Badger J.H."/>
            <person name="Glodek A."/>
            <person name="Zhou L."/>
            <person name="Overbeek R."/>
            <person name="Gocayne J.D."/>
            <person name="Weidman J.F."/>
            <person name="McDonald L.A."/>
            <person name="Utterback T.R."/>
            <person name="Cotton M.D."/>
            <person name="Spriggs T."/>
            <person name="Artiach P."/>
            <person name="Kaine B.P."/>
            <person name="Sykes S.M."/>
            <person name="Sadow P.W."/>
            <person name="D'Andrea K.P."/>
            <person name="Bowman C."/>
            <person name="Fujii C."/>
            <person name="Garland S.A."/>
            <person name="Mason T.M."/>
            <person name="Olsen G.J."/>
            <person name="Fraser C.M."/>
            <person name="Smith H.O."/>
            <person name="Woese C.R."/>
            <person name="Venter J.C."/>
        </authorList>
    </citation>
    <scope>NUCLEOTIDE SEQUENCE [LARGE SCALE GENOMIC DNA]</scope>
    <source>
        <strain>ATCC 49558 / DSM 4304 / JCM 9628 / NBRC 100126 / VC-16</strain>
    </source>
</reference>
<reference key="2">
    <citation type="journal article" date="2003" name="Nat. Struct. Biol.">
        <title>Structure and function of archaeal box C/D sRNP core proteins.</title>
        <authorList>
            <person name="Aittaleb M."/>
            <person name="Rashid R."/>
            <person name="Chen Q."/>
            <person name="Palmer J.R."/>
            <person name="Daniels C.J."/>
            <person name="Li H."/>
        </authorList>
    </citation>
    <scope>X-RAY CRYSTALLOGRAPHY (2.9 ANGSTROMS) IN COMPLEX WITH NOP5 AND S-ADENOSYL-L-METHIONINE</scope>
</reference>
<reference key="3">
    <citation type="journal article" date="2004" name="J. Biol. Chem.">
        <title>Structural and thermodynamic evidence for a stabilizing role of Nop5p in S-adenosyl-L-methionine binding to fibrillarin.</title>
        <authorList>
            <person name="Aittaleb M."/>
            <person name="Visone T."/>
            <person name="Fenley M.O."/>
            <person name="Li H."/>
        </authorList>
    </citation>
    <scope>X-RAY CRYSTALLOGRAPHY (3.5 ANGSTROMS) IN COMPLEX WITH NOP5 AND S-ADENOSYL-L-METHIONINE</scope>
    <scope>FUNCTION</scope>
    <scope>MUTAGENESIS OF THR-70; GLU-88; TYR-89 AND ASP-133</scope>
</reference>